<dbReference type="EMBL" id="L77117">
    <property type="protein sequence ID" value="AAB98560.1"/>
    <property type="molecule type" value="Genomic_DNA"/>
</dbReference>
<dbReference type="PIR" id="B64370">
    <property type="entry name" value="B64370"/>
</dbReference>
<dbReference type="SMR" id="Q57982"/>
<dbReference type="PaxDb" id="243232-MJ_0562"/>
<dbReference type="EnsemblBacteria" id="AAB98560">
    <property type="protein sequence ID" value="AAB98560"/>
    <property type="gene ID" value="MJ_0562"/>
</dbReference>
<dbReference type="KEGG" id="mja:MJ_0562"/>
<dbReference type="HOGENOM" id="CLU_2678943_0_0_2"/>
<dbReference type="InParanoid" id="Q57982"/>
<dbReference type="Proteomes" id="UP000000805">
    <property type="component" value="Chromosome"/>
</dbReference>
<sequence>MIGMNFKDPIEELLDNYFNAKKEYEKNPIEKNLNRLKKAEAKLMINYPNTNATYIYKNKKYKIIIKDSVSVIPI</sequence>
<organism>
    <name type="scientific">Methanocaldococcus jannaschii (strain ATCC 43067 / DSM 2661 / JAL-1 / JCM 10045 / NBRC 100440)</name>
    <name type="common">Methanococcus jannaschii</name>
    <dbReference type="NCBI Taxonomy" id="243232"/>
    <lineage>
        <taxon>Archaea</taxon>
        <taxon>Methanobacteriati</taxon>
        <taxon>Methanobacteriota</taxon>
        <taxon>Methanomada group</taxon>
        <taxon>Methanococci</taxon>
        <taxon>Methanococcales</taxon>
        <taxon>Methanocaldococcaceae</taxon>
        <taxon>Methanocaldococcus</taxon>
    </lineage>
</organism>
<proteinExistence type="predicted"/>
<reference key="1">
    <citation type="journal article" date="1996" name="Science">
        <title>Complete genome sequence of the methanogenic archaeon, Methanococcus jannaschii.</title>
        <authorList>
            <person name="Bult C.J."/>
            <person name="White O."/>
            <person name="Olsen G.J."/>
            <person name="Zhou L."/>
            <person name="Fleischmann R.D."/>
            <person name="Sutton G.G."/>
            <person name="Blake J.A."/>
            <person name="FitzGerald L.M."/>
            <person name="Clayton R.A."/>
            <person name="Gocayne J.D."/>
            <person name="Kerlavage A.R."/>
            <person name="Dougherty B.A."/>
            <person name="Tomb J.-F."/>
            <person name="Adams M.D."/>
            <person name="Reich C.I."/>
            <person name="Overbeek R."/>
            <person name="Kirkness E.F."/>
            <person name="Weinstock K.G."/>
            <person name="Merrick J.M."/>
            <person name="Glodek A."/>
            <person name="Scott J.L."/>
            <person name="Geoghagen N.S.M."/>
            <person name="Weidman J.F."/>
            <person name="Fuhrmann J.L."/>
            <person name="Nguyen D."/>
            <person name="Utterback T.R."/>
            <person name="Kelley J.M."/>
            <person name="Peterson J.D."/>
            <person name="Sadow P.W."/>
            <person name="Hanna M.C."/>
            <person name="Cotton M.D."/>
            <person name="Roberts K.M."/>
            <person name="Hurst M.A."/>
            <person name="Kaine B.P."/>
            <person name="Borodovsky M."/>
            <person name="Klenk H.-P."/>
            <person name="Fraser C.M."/>
            <person name="Smith H.O."/>
            <person name="Woese C.R."/>
            <person name="Venter J.C."/>
        </authorList>
    </citation>
    <scope>NUCLEOTIDE SEQUENCE [LARGE SCALE GENOMIC DNA]</scope>
    <source>
        <strain>ATCC 43067 / DSM 2661 / JAL-1 / JCM 10045 / NBRC 100440</strain>
    </source>
</reference>
<keyword id="KW-1185">Reference proteome</keyword>
<accession>Q57982</accession>
<name>Y562_METJA</name>
<protein>
    <recommendedName>
        <fullName>Uncharacterized protein MJ0562</fullName>
    </recommendedName>
</protein>
<feature type="chain" id="PRO_0000106932" description="Uncharacterized protein MJ0562">
    <location>
        <begin position="1"/>
        <end position="74"/>
    </location>
</feature>
<gene>
    <name type="ordered locus">MJ0562</name>
</gene>